<proteinExistence type="inferred from homology"/>
<reference key="1">
    <citation type="journal article" date="2010" name="J. Proteome Res.">
        <title>Molecular diversification of peptide toxins from the tarantula Haplopelma hainanum (Ornithoctonus hainana) venom based on transcriptomic, peptidomic, and genomic analyses.</title>
        <authorList>
            <person name="Tang X."/>
            <person name="Zhang Y."/>
            <person name="Hu W."/>
            <person name="Xu D."/>
            <person name="Tao H."/>
            <person name="Yang X."/>
            <person name="Li Y."/>
            <person name="Jiang L."/>
            <person name="Liang S."/>
        </authorList>
    </citation>
    <scope>NUCLEOTIDE SEQUENCE [LARGE SCALE GENOMIC DNA]</scope>
    <source>
        <tissue>Venom gland</tissue>
    </source>
</reference>
<organism>
    <name type="scientific">Cyriopagopus hainanus</name>
    <name type="common">Chinese bird spider</name>
    <name type="synonym">Haplopelma hainanum</name>
    <dbReference type="NCBI Taxonomy" id="209901"/>
    <lineage>
        <taxon>Eukaryota</taxon>
        <taxon>Metazoa</taxon>
        <taxon>Ecdysozoa</taxon>
        <taxon>Arthropoda</taxon>
        <taxon>Chelicerata</taxon>
        <taxon>Arachnida</taxon>
        <taxon>Araneae</taxon>
        <taxon>Mygalomorphae</taxon>
        <taxon>Theraphosidae</taxon>
        <taxon>Haplopelma</taxon>
    </lineage>
</organism>
<comment type="function">
    <text evidence="2">Serine protease inhibitor that inhibits trypsin at a molar ratio of 1:1.</text>
</comment>
<comment type="subcellular location">
    <subcellularLocation>
        <location evidence="6">Secreted</location>
    </subcellularLocation>
</comment>
<comment type="tissue specificity">
    <text evidence="6">Expressed by the venom gland.</text>
</comment>
<comment type="similarity">
    <text evidence="5">Belongs to the venom Kunitz-type family. 01 (intermediate) subfamily.</text>
</comment>
<comment type="caution">
    <text evidence="5">Lacks the conserved Cys residue in position 81.</text>
</comment>
<dbReference type="EMBL" id="GU293133">
    <property type="protein sequence ID" value="ADB56949.1"/>
    <property type="molecule type" value="Genomic_DNA"/>
</dbReference>
<dbReference type="SMR" id="D2Y2Q6"/>
<dbReference type="ArachnoServer" id="AS001978">
    <property type="toxin name" value="U15-theraphotoxin-Hhn1o"/>
</dbReference>
<dbReference type="GO" id="GO:0005576">
    <property type="term" value="C:extracellular region"/>
    <property type="evidence" value="ECO:0007669"/>
    <property type="project" value="UniProtKB-SubCell"/>
</dbReference>
<dbReference type="GO" id="GO:0015459">
    <property type="term" value="F:potassium channel regulator activity"/>
    <property type="evidence" value="ECO:0007669"/>
    <property type="project" value="UniProtKB-KW"/>
</dbReference>
<dbReference type="GO" id="GO:0004867">
    <property type="term" value="F:serine-type endopeptidase inhibitor activity"/>
    <property type="evidence" value="ECO:0007669"/>
    <property type="project" value="UniProtKB-KW"/>
</dbReference>
<dbReference type="GO" id="GO:0090729">
    <property type="term" value="F:toxin activity"/>
    <property type="evidence" value="ECO:0007669"/>
    <property type="project" value="UniProtKB-KW"/>
</dbReference>
<dbReference type="GO" id="GO:0044562">
    <property type="term" value="P:envenomation resulting in negative regulation of voltage-gated potassium channel activity in another organism"/>
    <property type="evidence" value="ECO:0007669"/>
    <property type="project" value="UniProtKB-ARBA"/>
</dbReference>
<dbReference type="CDD" id="cd22598">
    <property type="entry name" value="Kunitz_huwentoxin"/>
    <property type="match status" value="1"/>
</dbReference>
<dbReference type="Gene3D" id="4.10.410.10">
    <property type="entry name" value="Pancreatic trypsin inhibitor Kunitz domain"/>
    <property type="match status" value="1"/>
</dbReference>
<dbReference type="InterPro" id="IPR002223">
    <property type="entry name" value="Kunitz_BPTI"/>
</dbReference>
<dbReference type="InterPro" id="IPR036880">
    <property type="entry name" value="Kunitz_BPTI_sf"/>
</dbReference>
<dbReference type="PANTHER" id="PTHR47247">
    <property type="entry name" value="KUNITZ-TYPE PROTEASE INHIBITOR 2"/>
    <property type="match status" value="1"/>
</dbReference>
<dbReference type="PANTHER" id="PTHR47247:SF1">
    <property type="entry name" value="KUNITZ-TYPE PROTEASE INHIBITOR 2"/>
    <property type="match status" value="1"/>
</dbReference>
<dbReference type="Pfam" id="PF00014">
    <property type="entry name" value="Kunitz_BPTI"/>
    <property type="match status" value="1"/>
</dbReference>
<dbReference type="PRINTS" id="PR00759">
    <property type="entry name" value="BASICPTASE"/>
</dbReference>
<dbReference type="SMART" id="SM00131">
    <property type="entry name" value="KU"/>
    <property type="match status" value="1"/>
</dbReference>
<dbReference type="SUPFAM" id="SSF57362">
    <property type="entry name" value="BPTI-like"/>
    <property type="match status" value="1"/>
</dbReference>
<dbReference type="PROSITE" id="PS50279">
    <property type="entry name" value="BPTI_KUNITZ_2"/>
    <property type="match status" value="1"/>
</dbReference>
<accession>D2Y2Q6</accession>
<sequence length="88" mass="9911">MGIARILSAVLFLSVLFVVTFPTLLSADHHDGRIDTCRLPSDRGRCKASFERWYFNGTTCTKFVYGGYGGNDNRFPTEKARMKRCAKA</sequence>
<keyword id="KW-1015">Disulfide bond</keyword>
<keyword id="KW-0646">Protease inhibitor</keyword>
<keyword id="KW-0964">Secreted</keyword>
<keyword id="KW-0722">Serine protease inhibitor</keyword>
<keyword id="KW-0732">Signal</keyword>
<name>VKTO1_CYRHA</name>
<evidence type="ECO:0000250" key="1"/>
<evidence type="ECO:0000250" key="2">
    <source>
        <dbReference type="UniProtKB" id="P68425"/>
    </source>
</evidence>
<evidence type="ECO:0000255" key="3"/>
<evidence type="ECO:0000255" key="4">
    <source>
        <dbReference type="PROSITE-ProRule" id="PRU00031"/>
    </source>
</evidence>
<evidence type="ECO:0000305" key="5"/>
<evidence type="ECO:0000305" key="6">
    <source>
    </source>
</evidence>
<protein>
    <recommendedName>
        <fullName>Kunitz-type U15-theraphotoxin-Hhn1o</fullName>
        <shortName>U15-TRTX-Hhn1o</shortName>
    </recommendedName>
    <alternativeName>
        <fullName>Kunitz-type serine protease inhibitor hainantoxin-XI-15</fullName>
        <shortName>HNTX-XI-15</shortName>
    </alternativeName>
</protein>
<feature type="signal peptide" evidence="3">
    <location>
        <begin position="1"/>
        <end position="27"/>
    </location>
</feature>
<feature type="propeptide" id="PRO_0000401006" evidence="1">
    <location>
        <begin position="28"/>
        <end position="33"/>
    </location>
</feature>
<feature type="peptide" id="PRO_0000401007" description="Kunitz-type U15-theraphotoxin-Hhn1o">
    <location>
        <begin position="34"/>
        <end position="88"/>
    </location>
</feature>
<feature type="domain" description="BPTI/Kunitz inhibitor" evidence="4">
    <location>
        <begin position="37"/>
        <end position="85"/>
    </location>
</feature>
<feature type="site" description="Reactive bond for trypsin" evidence="1">
    <location>
        <begin position="47"/>
        <end position="48"/>
    </location>
</feature>
<feature type="disulfide bond" evidence="4">
    <location>
        <begin position="37"/>
        <end position="85"/>
    </location>
</feature>